<dbReference type="EC" id="5.4.2.12" evidence="1"/>
<dbReference type="EMBL" id="AE017354">
    <property type="protein sequence ID" value="AAU26598.1"/>
    <property type="molecule type" value="Genomic_DNA"/>
</dbReference>
<dbReference type="RefSeq" id="WP_010946249.1">
    <property type="nucleotide sequence ID" value="NC_002942.5"/>
</dbReference>
<dbReference type="RefSeq" id="YP_094545.1">
    <property type="nucleotide sequence ID" value="NC_002942.5"/>
</dbReference>
<dbReference type="SMR" id="Q5ZY71"/>
<dbReference type="STRING" id="272624.lpg0501"/>
<dbReference type="PaxDb" id="272624-lpg0501"/>
<dbReference type="GeneID" id="57034501"/>
<dbReference type="KEGG" id="lpn:lpg0501"/>
<dbReference type="PATRIC" id="fig|272624.6.peg.522"/>
<dbReference type="eggNOG" id="COG0696">
    <property type="taxonomic scope" value="Bacteria"/>
</dbReference>
<dbReference type="HOGENOM" id="CLU_026099_2_0_6"/>
<dbReference type="OrthoDB" id="9800863at2"/>
<dbReference type="UniPathway" id="UPA00109">
    <property type="reaction ID" value="UER00186"/>
</dbReference>
<dbReference type="Proteomes" id="UP000000609">
    <property type="component" value="Chromosome"/>
</dbReference>
<dbReference type="GO" id="GO:0005829">
    <property type="term" value="C:cytosol"/>
    <property type="evidence" value="ECO:0007669"/>
    <property type="project" value="TreeGrafter"/>
</dbReference>
<dbReference type="GO" id="GO:0030145">
    <property type="term" value="F:manganese ion binding"/>
    <property type="evidence" value="ECO:0007669"/>
    <property type="project" value="UniProtKB-UniRule"/>
</dbReference>
<dbReference type="GO" id="GO:0004619">
    <property type="term" value="F:phosphoglycerate mutase activity"/>
    <property type="evidence" value="ECO:0007669"/>
    <property type="project" value="UniProtKB-EC"/>
</dbReference>
<dbReference type="GO" id="GO:0006007">
    <property type="term" value="P:glucose catabolic process"/>
    <property type="evidence" value="ECO:0007669"/>
    <property type="project" value="InterPro"/>
</dbReference>
<dbReference type="GO" id="GO:0006096">
    <property type="term" value="P:glycolytic process"/>
    <property type="evidence" value="ECO:0007669"/>
    <property type="project" value="UniProtKB-UniRule"/>
</dbReference>
<dbReference type="CDD" id="cd16010">
    <property type="entry name" value="iPGM"/>
    <property type="match status" value="1"/>
</dbReference>
<dbReference type="FunFam" id="3.40.1450.10:FF:000002">
    <property type="entry name" value="2,3-bisphosphoglycerate-independent phosphoglycerate mutase"/>
    <property type="match status" value="1"/>
</dbReference>
<dbReference type="Gene3D" id="3.40.720.10">
    <property type="entry name" value="Alkaline Phosphatase, subunit A"/>
    <property type="match status" value="1"/>
</dbReference>
<dbReference type="Gene3D" id="3.40.1450.10">
    <property type="entry name" value="BPG-independent phosphoglycerate mutase, domain B"/>
    <property type="match status" value="1"/>
</dbReference>
<dbReference type="HAMAP" id="MF_01038">
    <property type="entry name" value="GpmI"/>
    <property type="match status" value="1"/>
</dbReference>
<dbReference type="InterPro" id="IPR017850">
    <property type="entry name" value="Alkaline_phosphatase_core_sf"/>
</dbReference>
<dbReference type="InterPro" id="IPR011258">
    <property type="entry name" value="BPG-indep_PGM_N"/>
</dbReference>
<dbReference type="InterPro" id="IPR006124">
    <property type="entry name" value="Metalloenzyme"/>
</dbReference>
<dbReference type="InterPro" id="IPR036646">
    <property type="entry name" value="PGAM_B_sf"/>
</dbReference>
<dbReference type="InterPro" id="IPR005995">
    <property type="entry name" value="Pgm_bpd_ind"/>
</dbReference>
<dbReference type="NCBIfam" id="TIGR01307">
    <property type="entry name" value="pgm_bpd_ind"/>
    <property type="match status" value="1"/>
</dbReference>
<dbReference type="PANTHER" id="PTHR31637">
    <property type="entry name" value="2,3-BISPHOSPHOGLYCERATE-INDEPENDENT PHOSPHOGLYCERATE MUTASE"/>
    <property type="match status" value="1"/>
</dbReference>
<dbReference type="PANTHER" id="PTHR31637:SF0">
    <property type="entry name" value="2,3-BISPHOSPHOGLYCERATE-INDEPENDENT PHOSPHOGLYCERATE MUTASE"/>
    <property type="match status" value="1"/>
</dbReference>
<dbReference type="Pfam" id="PF06415">
    <property type="entry name" value="iPGM_N"/>
    <property type="match status" value="1"/>
</dbReference>
<dbReference type="Pfam" id="PF01676">
    <property type="entry name" value="Metalloenzyme"/>
    <property type="match status" value="1"/>
</dbReference>
<dbReference type="PIRSF" id="PIRSF001492">
    <property type="entry name" value="IPGAM"/>
    <property type="match status" value="1"/>
</dbReference>
<dbReference type="SUPFAM" id="SSF64158">
    <property type="entry name" value="2,3-Bisphosphoglycerate-independent phosphoglycerate mutase, substrate-binding domain"/>
    <property type="match status" value="1"/>
</dbReference>
<dbReference type="SUPFAM" id="SSF53649">
    <property type="entry name" value="Alkaline phosphatase-like"/>
    <property type="match status" value="1"/>
</dbReference>
<accession>Q5ZY71</accession>
<reference key="1">
    <citation type="journal article" date="2004" name="Science">
        <title>The genomic sequence of the accidental pathogen Legionella pneumophila.</title>
        <authorList>
            <person name="Chien M."/>
            <person name="Morozova I."/>
            <person name="Shi S."/>
            <person name="Sheng H."/>
            <person name="Chen J."/>
            <person name="Gomez S.M."/>
            <person name="Asamani G."/>
            <person name="Hill K."/>
            <person name="Nuara J."/>
            <person name="Feder M."/>
            <person name="Rineer J."/>
            <person name="Greenberg J.J."/>
            <person name="Steshenko V."/>
            <person name="Park S.H."/>
            <person name="Zhao B."/>
            <person name="Teplitskaya E."/>
            <person name="Edwards J.R."/>
            <person name="Pampou S."/>
            <person name="Georghiou A."/>
            <person name="Chou I.-C."/>
            <person name="Iannuccilli W."/>
            <person name="Ulz M.E."/>
            <person name="Kim D.H."/>
            <person name="Geringer-Sameth A."/>
            <person name="Goldsberry C."/>
            <person name="Morozov P."/>
            <person name="Fischer S.G."/>
            <person name="Segal G."/>
            <person name="Qu X."/>
            <person name="Rzhetsky A."/>
            <person name="Zhang P."/>
            <person name="Cayanis E."/>
            <person name="De Jong P.J."/>
            <person name="Ju J."/>
            <person name="Kalachikov S."/>
            <person name="Shuman H.A."/>
            <person name="Russo J.J."/>
        </authorList>
    </citation>
    <scope>NUCLEOTIDE SEQUENCE [LARGE SCALE GENOMIC DNA]</scope>
    <source>
        <strain>Philadelphia 1 / ATCC 33152 / DSM 7513</strain>
    </source>
</reference>
<sequence>MSHNAPLVLMILDGWGYNENDRYNAIAKANTPQWDEWWQTCPHILLKASGLPVGLPDEQMGNSEVGHMHIGAGRVIQQDFTRINEAINNGKFAKNAVFHEVIDQLKKTEKSLHIMGLLSPGGVHSHEQHLFALLALCNQKKFRSVHLHLFLDGRDTPPQSALDSLKCLNEELAKHPVATINSICGRYYAMDRDKRWERVEPVYNLLTQGKSERQFPDAETAIHFYYKNKISDEFVPPTLIGKEHSIQDGDAVLFFNFRADRARQLTSTFLDPSFKGFERKTLPKLSYFVSMTQYDKNLLTTTAFPPVPLNNTLGEVLSSHGLSQLRIAETEKYAHVTFFFNGGCESVFTNEERIMVPSPQVATYDLQPEMSAHELTKTLIAAINSQDYHVIICNYANADMVGHTGNFEATVQAIECLDQCMQQVWQALKNNGGKLLITADHGNAEEMFSEATNQAHTAHTSEPVPFLYVGGGWHFTHSEGSLIDIAPSLLALLGITPPPEMTGRILLEKNHAHP</sequence>
<name>GPMI_LEGPH</name>
<gene>
    <name evidence="1" type="primary">gpmI</name>
    <name type="synonym">pgm</name>
    <name type="ordered locus">lpg0501</name>
</gene>
<organism>
    <name type="scientific">Legionella pneumophila subsp. pneumophila (strain Philadelphia 1 / ATCC 33152 / DSM 7513)</name>
    <dbReference type="NCBI Taxonomy" id="272624"/>
    <lineage>
        <taxon>Bacteria</taxon>
        <taxon>Pseudomonadati</taxon>
        <taxon>Pseudomonadota</taxon>
        <taxon>Gammaproteobacteria</taxon>
        <taxon>Legionellales</taxon>
        <taxon>Legionellaceae</taxon>
        <taxon>Legionella</taxon>
    </lineage>
</organism>
<proteinExistence type="inferred from homology"/>
<keyword id="KW-0324">Glycolysis</keyword>
<keyword id="KW-0413">Isomerase</keyword>
<keyword id="KW-0464">Manganese</keyword>
<keyword id="KW-0479">Metal-binding</keyword>
<keyword id="KW-1185">Reference proteome</keyword>
<feature type="chain" id="PRO_0000212159" description="2,3-bisphosphoglycerate-independent phosphoglycerate mutase">
    <location>
        <begin position="1"/>
        <end position="514"/>
    </location>
</feature>
<feature type="active site" description="Phosphoserine intermediate" evidence="1">
    <location>
        <position position="63"/>
    </location>
</feature>
<feature type="binding site" evidence="1">
    <location>
        <position position="13"/>
    </location>
    <ligand>
        <name>Mn(2+)</name>
        <dbReference type="ChEBI" id="CHEBI:29035"/>
        <label>2</label>
    </ligand>
</feature>
<feature type="binding site" evidence="1">
    <location>
        <position position="63"/>
    </location>
    <ligand>
        <name>Mn(2+)</name>
        <dbReference type="ChEBI" id="CHEBI:29035"/>
        <label>2</label>
    </ligand>
</feature>
<feature type="binding site" evidence="1">
    <location>
        <position position="124"/>
    </location>
    <ligand>
        <name>substrate</name>
    </ligand>
</feature>
<feature type="binding site" evidence="1">
    <location>
        <begin position="154"/>
        <end position="155"/>
    </location>
    <ligand>
        <name>substrate</name>
    </ligand>
</feature>
<feature type="binding site" evidence="1">
    <location>
        <position position="186"/>
    </location>
    <ligand>
        <name>substrate</name>
    </ligand>
</feature>
<feature type="binding site" evidence="1">
    <location>
        <position position="192"/>
    </location>
    <ligand>
        <name>substrate</name>
    </ligand>
</feature>
<feature type="binding site" evidence="1">
    <location>
        <begin position="258"/>
        <end position="261"/>
    </location>
    <ligand>
        <name>substrate</name>
    </ligand>
</feature>
<feature type="binding site" evidence="1">
    <location>
        <position position="332"/>
    </location>
    <ligand>
        <name>substrate</name>
    </ligand>
</feature>
<feature type="binding site" evidence="1">
    <location>
        <position position="399"/>
    </location>
    <ligand>
        <name>Mn(2+)</name>
        <dbReference type="ChEBI" id="CHEBI:29035"/>
        <label>1</label>
    </ligand>
</feature>
<feature type="binding site" evidence="1">
    <location>
        <position position="403"/>
    </location>
    <ligand>
        <name>Mn(2+)</name>
        <dbReference type="ChEBI" id="CHEBI:29035"/>
        <label>1</label>
    </ligand>
</feature>
<feature type="binding site" evidence="1">
    <location>
        <position position="440"/>
    </location>
    <ligand>
        <name>Mn(2+)</name>
        <dbReference type="ChEBI" id="CHEBI:29035"/>
        <label>2</label>
    </ligand>
</feature>
<feature type="binding site" evidence="1">
    <location>
        <position position="441"/>
    </location>
    <ligand>
        <name>Mn(2+)</name>
        <dbReference type="ChEBI" id="CHEBI:29035"/>
        <label>2</label>
    </ligand>
</feature>
<feature type="binding site" evidence="1">
    <location>
        <position position="459"/>
    </location>
    <ligand>
        <name>Mn(2+)</name>
        <dbReference type="ChEBI" id="CHEBI:29035"/>
        <label>1</label>
    </ligand>
</feature>
<comment type="function">
    <text evidence="1">Catalyzes the interconversion of 2-phosphoglycerate and 3-phosphoglycerate.</text>
</comment>
<comment type="catalytic activity">
    <reaction evidence="1">
        <text>(2R)-2-phosphoglycerate = (2R)-3-phosphoglycerate</text>
        <dbReference type="Rhea" id="RHEA:15901"/>
        <dbReference type="ChEBI" id="CHEBI:58272"/>
        <dbReference type="ChEBI" id="CHEBI:58289"/>
        <dbReference type="EC" id="5.4.2.12"/>
    </reaction>
</comment>
<comment type="cofactor">
    <cofactor evidence="1">
        <name>Mn(2+)</name>
        <dbReference type="ChEBI" id="CHEBI:29035"/>
    </cofactor>
    <text evidence="1">Binds 2 manganese ions per subunit.</text>
</comment>
<comment type="pathway">
    <text evidence="1">Carbohydrate degradation; glycolysis; pyruvate from D-glyceraldehyde 3-phosphate: step 3/5.</text>
</comment>
<comment type="subunit">
    <text evidence="1">Monomer.</text>
</comment>
<comment type="similarity">
    <text evidence="1">Belongs to the BPG-independent phosphoglycerate mutase family.</text>
</comment>
<protein>
    <recommendedName>
        <fullName evidence="1">2,3-bisphosphoglycerate-independent phosphoglycerate mutase</fullName>
        <shortName evidence="1">BPG-independent PGAM</shortName>
        <shortName evidence="1">Phosphoglyceromutase</shortName>
        <shortName evidence="1">iPGM</shortName>
        <ecNumber evidence="1">5.4.2.12</ecNumber>
    </recommendedName>
</protein>
<evidence type="ECO:0000255" key="1">
    <source>
        <dbReference type="HAMAP-Rule" id="MF_01038"/>
    </source>
</evidence>